<feature type="chain" id="PRO_0000145186" description="DNA topoisomerase 3">
    <location>
        <begin position="1"/>
        <end position="649"/>
    </location>
</feature>
<feature type="domain" description="Toprim" evidence="1">
    <location>
        <begin position="1"/>
        <end position="134"/>
    </location>
</feature>
<feature type="domain" description="Topo IA-type catalytic" evidence="2">
    <location>
        <begin position="155"/>
        <end position="603"/>
    </location>
</feature>
<feature type="region of interest" description="Interaction with DNA" evidence="1">
    <location>
        <begin position="194"/>
        <end position="199"/>
    </location>
</feature>
<feature type="region of interest" description="Disordered" evidence="3">
    <location>
        <begin position="614"/>
        <end position="649"/>
    </location>
</feature>
<feature type="active site" description="O-(5'-phospho-DNA)-tyrosine intermediate" evidence="2">
    <location>
        <position position="328"/>
    </location>
</feature>
<feature type="binding site" evidence="1">
    <location>
        <position position="7"/>
    </location>
    <ligand>
        <name>Mg(2+)</name>
        <dbReference type="ChEBI" id="CHEBI:18420"/>
        <label>1</label>
        <note>catalytic</note>
    </ligand>
</feature>
<feature type="binding site" evidence="1">
    <location>
        <position position="103"/>
    </location>
    <ligand>
        <name>Mg(2+)</name>
        <dbReference type="ChEBI" id="CHEBI:18420"/>
        <label>1</label>
        <note>catalytic</note>
    </ligand>
</feature>
<feature type="binding site" evidence="1">
    <location>
        <position position="103"/>
    </location>
    <ligand>
        <name>Mg(2+)</name>
        <dbReference type="ChEBI" id="CHEBI:18420"/>
        <label>2</label>
    </ligand>
</feature>
<feature type="binding site" evidence="1">
    <location>
        <position position="105"/>
    </location>
    <ligand>
        <name>Mg(2+)</name>
        <dbReference type="ChEBI" id="CHEBI:18420"/>
        <label>2</label>
    </ligand>
</feature>
<feature type="site" description="Interaction with DNA" evidence="1">
    <location>
        <position position="61"/>
    </location>
</feature>
<feature type="site" description="Interaction with DNA" evidence="1">
    <location>
        <position position="170"/>
    </location>
</feature>
<feature type="site" description="Interaction with DNA" evidence="1">
    <location>
        <position position="178"/>
    </location>
</feature>
<feature type="site" description="Interaction with DNA" evidence="1">
    <location>
        <position position="185"/>
    </location>
</feature>
<feature type="site" description="Interaction with DNA" evidence="1">
    <location>
        <position position="330"/>
    </location>
</feature>
<keyword id="KW-0238">DNA-binding</keyword>
<keyword id="KW-0413">Isomerase</keyword>
<keyword id="KW-0460">Magnesium</keyword>
<keyword id="KW-0479">Metal-binding</keyword>
<keyword id="KW-1185">Reference proteome</keyword>
<keyword id="KW-0799">Topoisomerase</keyword>
<name>TOP3_SALTY</name>
<gene>
    <name evidence="1" type="primary">topB</name>
    <name type="ordered locus">STM1298</name>
</gene>
<organism>
    <name type="scientific">Salmonella typhimurium (strain LT2 / SGSC1412 / ATCC 700720)</name>
    <dbReference type="NCBI Taxonomy" id="99287"/>
    <lineage>
        <taxon>Bacteria</taxon>
        <taxon>Pseudomonadati</taxon>
        <taxon>Pseudomonadota</taxon>
        <taxon>Gammaproteobacteria</taxon>
        <taxon>Enterobacterales</taxon>
        <taxon>Enterobacteriaceae</taxon>
        <taxon>Salmonella</taxon>
    </lineage>
</organism>
<comment type="function">
    <text evidence="1">Releases the supercoiling and torsional tension of DNA, which is introduced during the DNA replication and transcription, by transiently cleaving and rejoining one strand of the DNA duplex. Introduces a single-strand break via transesterification at a target site in duplex DNA. The scissile phosphodiester is attacked by the catalytic tyrosine of the enzyme, resulting in the formation of a DNA-(5'-phosphotyrosyl)-enzyme intermediate and the expulsion of a 3'-OH DNA strand. The free DNA strand then undergoes passage around the unbroken strand, thus removing DNA supercoils. Finally, in the religation step, the DNA 3'-OH attacks the covalent intermediate to expel the active-site tyrosine and restore the DNA phosphodiester backbone.</text>
</comment>
<comment type="catalytic activity">
    <reaction evidence="1">
        <text>ATP-independent breakage of single-stranded DNA, followed by passage and rejoining.</text>
        <dbReference type="EC" id="5.6.2.1"/>
    </reaction>
</comment>
<comment type="cofactor">
    <cofactor evidence="1">
        <name>Mg(2+)</name>
        <dbReference type="ChEBI" id="CHEBI:18420"/>
    </cofactor>
    <text evidence="1">Binds two Mg(2+) per subunit.</text>
</comment>
<comment type="similarity">
    <text evidence="1 2">Belongs to the type IA topoisomerase family.</text>
</comment>
<protein>
    <recommendedName>
        <fullName evidence="1">DNA topoisomerase 3</fullName>
        <ecNumber evidence="1">5.6.2.1</ecNumber>
    </recommendedName>
    <alternativeName>
        <fullName evidence="1">DNA topoisomerase III</fullName>
    </alternativeName>
</protein>
<proteinExistence type="inferred from homology"/>
<reference key="1">
    <citation type="journal article" date="2001" name="Nature">
        <title>Complete genome sequence of Salmonella enterica serovar Typhimurium LT2.</title>
        <authorList>
            <person name="McClelland M."/>
            <person name="Sanderson K.E."/>
            <person name="Spieth J."/>
            <person name="Clifton S.W."/>
            <person name="Latreille P."/>
            <person name="Courtney L."/>
            <person name="Porwollik S."/>
            <person name="Ali J."/>
            <person name="Dante M."/>
            <person name="Du F."/>
            <person name="Hou S."/>
            <person name="Layman D."/>
            <person name="Leonard S."/>
            <person name="Nguyen C."/>
            <person name="Scott K."/>
            <person name="Holmes A."/>
            <person name="Grewal N."/>
            <person name="Mulvaney E."/>
            <person name="Ryan E."/>
            <person name="Sun H."/>
            <person name="Florea L."/>
            <person name="Miller W."/>
            <person name="Stoneking T."/>
            <person name="Nhan M."/>
            <person name="Waterston R."/>
            <person name="Wilson R.K."/>
        </authorList>
    </citation>
    <scope>NUCLEOTIDE SEQUENCE [LARGE SCALE GENOMIC DNA]</scope>
    <source>
        <strain>LT2 / SGSC1412 / ATCC 700720</strain>
    </source>
</reference>
<reference key="2">
    <citation type="journal article" date="1989" name="J. Biol. Chem.">
        <title>Affinity labeling of a glutamyl peptide in the coenzyme binding site of NADP+-specific glutamate dehydrogenase of Salmonella typhimurium by 2-[(4-bromo-2,3-dioxobutyl)thio]-1,N6-ethenoadenosine 2',5'-bisphosphate.</title>
        <authorList>
            <person name="Bansal A."/>
            <person name="Dayton M.A."/>
            <person name="Zalkin H."/>
            <person name="Colman R.F."/>
        </authorList>
    </citation>
    <scope>NUCLEOTIDE SEQUENCE [GENOMIC DNA] OF 601-649</scope>
</reference>
<reference key="3">
    <citation type="journal article" date="1994" name="Nat. Genet.">
        <title>Large scale bacterial gene discovery by similarity search.</title>
        <authorList>
            <person name="Robison K."/>
            <person name="Gilbert W."/>
            <person name="Church G.M."/>
        </authorList>
    </citation>
    <scope>IDENTIFICATION</scope>
</reference>
<evidence type="ECO:0000255" key="1">
    <source>
        <dbReference type="HAMAP-Rule" id="MF_00953"/>
    </source>
</evidence>
<evidence type="ECO:0000255" key="2">
    <source>
        <dbReference type="PROSITE-ProRule" id="PRU01383"/>
    </source>
</evidence>
<evidence type="ECO:0000256" key="3">
    <source>
        <dbReference type="SAM" id="MobiDB-lite"/>
    </source>
</evidence>
<sequence>MRLFIAEKPSLGRAIADVLPKPHRKGDGFIECGNGQVVTWCIGHLLEQAQPDAYDSRYARWNLADLPIVPEKWQLQPRPSVTKQLNVIKRFLHQAGEIIHAGDPDREGQLLVDEVLDYLQLPAEKRQQVRRCLINDLNPQAVERAIDRLRANSDFVPLCVSALARARADWLYGINMTRAYTILGRNAGYQGVLSVGRVQTPVLGLVVRRDEEIENFVAKDFFEVKAHIVTPADERFTAIWQPSEACEPYQDEEGRLLHRPLAEHVVNRINGQPALVTSYNDKRESESAPLPFSLSTLQIEAAKRFGLSAQNVLDICQKLYETHKLITYPRSDCRYLPEEHFAGRQAVMNAISVHAPDLLPQPVVNPDTRNRCWDDKKVDAHHAIIPTARSSSVHLTENEAKVYTLIARQYLMQFCPDAVFRKCVIELEIAKGKFVAKARFLAEAGWRTLLGSKERDEENDGTPLPVVAKGDELLCEKGEVVERQTQPPRHFTDATLLSAMTGIARFVQDKDLKKILRATDGLGTEATRAGIIELLFKRSFLTKKGRYIHSTDAGKALIHSLPEMAARPDMTAHWESVLTQISEKQCRYQDFMQPLVGTLYQLIEQAKRTPVKRFRGIVAPGGGDKKKSAPRKRAGKKSPPAAETGRQTE</sequence>
<dbReference type="EC" id="5.6.2.1" evidence="1"/>
<dbReference type="EMBL" id="AE006468">
    <property type="protein sequence ID" value="AAL20223.1"/>
    <property type="molecule type" value="Genomic_DNA"/>
</dbReference>
<dbReference type="EMBL" id="M24021">
    <property type="status" value="NOT_ANNOTATED_CDS"/>
    <property type="molecule type" value="Genomic_DNA"/>
</dbReference>
<dbReference type="RefSeq" id="NP_460264.1">
    <property type="nucleotide sequence ID" value="NC_003197.2"/>
</dbReference>
<dbReference type="RefSeq" id="WP_001235865.1">
    <property type="nucleotide sequence ID" value="NC_003197.2"/>
</dbReference>
<dbReference type="SMR" id="P40687"/>
<dbReference type="STRING" id="99287.STM1298"/>
<dbReference type="PaxDb" id="99287-STM1298"/>
<dbReference type="GeneID" id="1252816"/>
<dbReference type="KEGG" id="stm:STM1298"/>
<dbReference type="PATRIC" id="fig|99287.12.peg.1379"/>
<dbReference type="HOGENOM" id="CLU_002929_5_2_6"/>
<dbReference type="OMA" id="VIHNVYS"/>
<dbReference type="PhylomeDB" id="P40687"/>
<dbReference type="BioCyc" id="SENT99287:STM1298-MONOMER"/>
<dbReference type="Proteomes" id="UP000001014">
    <property type="component" value="Chromosome"/>
</dbReference>
<dbReference type="GO" id="GO:0043597">
    <property type="term" value="C:cytoplasmic replication fork"/>
    <property type="evidence" value="ECO:0000318"/>
    <property type="project" value="GO_Central"/>
</dbReference>
<dbReference type="GO" id="GO:0003677">
    <property type="term" value="F:DNA binding"/>
    <property type="evidence" value="ECO:0007669"/>
    <property type="project" value="UniProtKB-KW"/>
</dbReference>
<dbReference type="GO" id="GO:0003917">
    <property type="term" value="F:DNA topoisomerase type I (single strand cut, ATP-independent) activity"/>
    <property type="evidence" value="ECO:0000318"/>
    <property type="project" value="GO_Central"/>
</dbReference>
<dbReference type="GO" id="GO:0000287">
    <property type="term" value="F:magnesium ion binding"/>
    <property type="evidence" value="ECO:0007669"/>
    <property type="project" value="UniProtKB-UniRule"/>
</dbReference>
<dbReference type="GO" id="GO:0006310">
    <property type="term" value="P:DNA recombination"/>
    <property type="evidence" value="ECO:0000318"/>
    <property type="project" value="GO_Central"/>
</dbReference>
<dbReference type="GO" id="GO:0006281">
    <property type="term" value="P:DNA repair"/>
    <property type="evidence" value="ECO:0000318"/>
    <property type="project" value="GO_Central"/>
</dbReference>
<dbReference type="GO" id="GO:0006265">
    <property type="term" value="P:DNA topological change"/>
    <property type="evidence" value="ECO:0000318"/>
    <property type="project" value="GO_Central"/>
</dbReference>
<dbReference type="CDD" id="cd00186">
    <property type="entry name" value="TOP1Ac"/>
    <property type="match status" value="1"/>
</dbReference>
<dbReference type="CDD" id="cd03362">
    <property type="entry name" value="TOPRIM_TopoIA_TopoIII"/>
    <property type="match status" value="1"/>
</dbReference>
<dbReference type="FunFam" id="1.10.290.10:FF:000004">
    <property type="entry name" value="DNA topoisomerase 3"/>
    <property type="match status" value="1"/>
</dbReference>
<dbReference type="FunFam" id="1.10.460.10:FF:000004">
    <property type="entry name" value="DNA topoisomerase 3"/>
    <property type="match status" value="1"/>
</dbReference>
<dbReference type="FunFam" id="3.40.50.140:FF:000004">
    <property type="entry name" value="DNA topoisomerase 3"/>
    <property type="match status" value="1"/>
</dbReference>
<dbReference type="Gene3D" id="3.40.50.140">
    <property type="match status" value="1"/>
</dbReference>
<dbReference type="Gene3D" id="1.10.460.10">
    <property type="entry name" value="Topoisomerase I, domain 2"/>
    <property type="match status" value="1"/>
</dbReference>
<dbReference type="Gene3D" id="2.70.20.10">
    <property type="entry name" value="Topoisomerase I, domain 3"/>
    <property type="match status" value="1"/>
</dbReference>
<dbReference type="Gene3D" id="1.10.290.10">
    <property type="entry name" value="Topoisomerase I, domain 4"/>
    <property type="match status" value="1"/>
</dbReference>
<dbReference type="HAMAP" id="MF_00953">
    <property type="entry name" value="Topoisom_3_prok"/>
    <property type="match status" value="1"/>
</dbReference>
<dbReference type="InterPro" id="IPR000380">
    <property type="entry name" value="Topo_IA"/>
</dbReference>
<dbReference type="InterPro" id="IPR003601">
    <property type="entry name" value="Topo_IA_2"/>
</dbReference>
<dbReference type="InterPro" id="IPR023406">
    <property type="entry name" value="Topo_IA_AS"/>
</dbReference>
<dbReference type="InterPro" id="IPR013497">
    <property type="entry name" value="Topo_IA_cen"/>
</dbReference>
<dbReference type="InterPro" id="IPR013824">
    <property type="entry name" value="Topo_IA_cen_sub1"/>
</dbReference>
<dbReference type="InterPro" id="IPR013825">
    <property type="entry name" value="Topo_IA_cen_sub2"/>
</dbReference>
<dbReference type="InterPro" id="IPR013826">
    <property type="entry name" value="Topo_IA_cen_sub3"/>
</dbReference>
<dbReference type="InterPro" id="IPR023405">
    <property type="entry name" value="Topo_IA_core_domain"/>
</dbReference>
<dbReference type="InterPro" id="IPR003602">
    <property type="entry name" value="Topo_IA_DNA-bd_dom"/>
</dbReference>
<dbReference type="InterPro" id="IPR005738">
    <property type="entry name" value="TopoIII"/>
</dbReference>
<dbReference type="InterPro" id="IPR006171">
    <property type="entry name" value="TOPRIM_dom"/>
</dbReference>
<dbReference type="InterPro" id="IPR034144">
    <property type="entry name" value="TOPRIM_TopoIII"/>
</dbReference>
<dbReference type="NCBIfam" id="NF005829">
    <property type="entry name" value="PRK07726.1"/>
    <property type="match status" value="1"/>
</dbReference>
<dbReference type="NCBIfam" id="TIGR01056">
    <property type="entry name" value="topB"/>
    <property type="match status" value="1"/>
</dbReference>
<dbReference type="PANTHER" id="PTHR11390:SF21">
    <property type="entry name" value="DNA TOPOISOMERASE 3-ALPHA"/>
    <property type="match status" value="1"/>
</dbReference>
<dbReference type="PANTHER" id="PTHR11390">
    <property type="entry name" value="PROKARYOTIC DNA TOPOISOMERASE"/>
    <property type="match status" value="1"/>
</dbReference>
<dbReference type="Pfam" id="PF01131">
    <property type="entry name" value="Topoisom_bac"/>
    <property type="match status" value="1"/>
</dbReference>
<dbReference type="Pfam" id="PF01751">
    <property type="entry name" value="Toprim"/>
    <property type="match status" value="1"/>
</dbReference>
<dbReference type="PRINTS" id="PR00417">
    <property type="entry name" value="PRTPISMRASEI"/>
</dbReference>
<dbReference type="SMART" id="SM00437">
    <property type="entry name" value="TOP1Ac"/>
    <property type="match status" value="1"/>
</dbReference>
<dbReference type="SMART" id="SM00436">
    <property type="entry name" value="TOP1Bc"/>
    <property type="match status" value="1"/>
</dbReference>
<dbReference type="SMART" id="SM00493">
    <property type="entry name" value="TOPRIM"/>
    <property type="match status" value="1"/>
</dbReference>
<dbReference type="SUPFAM" id="SSF56712">
    <property type="entry name" value="Prokaryotic type I DNA topoisomerase"/>
    <property type="match status" value="1"/>
</dbReference>
<dbReference type="PROSITE" id="PS00396">
    <property type="entry name" value="TOPO_IA_1"/>
    <property type="match status" value="1"/>
</dbReference>
<dbReference type="PROSITE" id="PS52039">
    <property type="entry name" value="TOPO_IA_2"/>
    <property type="match status" value="1"/>
</dbReference>
<dbReference type="PROSITE" id="PS50880">
    <property type="entry name" value="TOPRIM"/>
    <property type="match status" value="1"/>
</dbReference>
<accession>P40687</accession>